<feature type="chain" id="PRO_0000250380" description="Pre-mRNA-splicing factor syf2">
    <location>
        <begin position="1"/>
        <end position="249"/>
    </location>
</feature>
<feature type="region of interest" description="Disordered" evidence="3">
    <location>
        <begin position="1"/>
        <end position="22"/>
    </location>
</feature>
<feature type="coiled-coil region" evidence="2">
    <location>
        <begin position="34"/>
        <end position="95"/>
    </location>
</feature>
<sequence>MAAVEENEAPSPVMAITGISEDPASIAAEDTAAQKREEHLRKFRELHLKRNEARKLNHQEVVEEDKRLKLPANWEAKKSRLEWELKVEEKKKECVAKGEDYERVKLLEISAEDAERFERKRKKRNPDLGFSDYAAAQMRQYQRLTRQIKPDLEKYAKLREESGEEFYPTSNSLLHGTHVPCKEGVDKMVEDLEKQIQKREKYSRRRPYNDDADIDYINERNAKFNKKAERFYGKYTAEIKQNLERGTAV</sequence>
<organism>
    <name type="scientific">Gekko japonicus</name>
    <name type="common">Schlegel's Japanese gecko</name>
    <dbReference type="NCBI Taxonomy" id="146911"/>
    <lineage>
        <taxon>Eukaryota</taxon>
        <taxon>Metazoa</taxon>
        <taxon>Chordata</taxon>
        <taxon>Craniata</taxon>
        <taxon>Vertebrata</taxon>
        <taxon>Euteleostomi</taxon>
        <taxon>Lepidosauria</taxon>
        <taxon>Squamata</taxon>
        <taxon>Bifurcata</taxon>
        <taxon>Gekkota</taxon>
        <taxon>Gekkonidae</taxon>
        <taxon>Gekkoninae</taxon>
        <taxon>Gekko</taxon>
    </lineage>
</organism>
<reference key="1">
    <citation type="submission" date="2004-05" db="EMBL/GenBank/DDBJ databases">
        <title>Analysis of expressed sequence tags and cloning of full length cDNA from brain and spinal cord cDNA library in Gecko.</title>
        <authorList>
            <person name="Liu Y."/>
            <person name="Gu X."/>
            <person name="Ding F."/>
            <person name="Liu M."/>
            <person name="Yao D."/>
            <person name="Shen M."/>
        </authorList>
    </citation>
    <scope>NUCLEOTIDE SEQUENCE [LARGE SCALE MRNA]</scope>
    <source>
        <tissue>Brain</tissue>
    </source>
</reference>
<gene>
    <name type="primary">syf2</name>
    <name type="synonym">GekBS028P</name>
</gene>
<accession>Q6DV01</accession>
<dbReference type="EMBL" id="AY641849">
    <property type="protein sequence ID" value="AAT68230.1"/>
    <property type="molecule type" value="mRNA"/>
</dbReference>
<dbReference type="RefSeq" id="NP_001310429.1">
    <property type="nucleotide sequence ID" value="NM_001323500.1"/>
</dbReference>
<dbReference type="SMR" id="Q6DV01"/>
<dbReference type="GeneID" id="107110818"/>
<dbReference type="KEGG" id="gja:107110818"/>
<dbReference type="CTD" id="25949"/>
<dbReference type="OrthoDB" id="199717at2759"/>
<dbReference type="Proteomes" id="UP000694871">
    <property type="component" value="Unplaced"/>
</dbReference>
<dbReference type="GO" id="GO:0005634">
    <property type="term" value="C:nucleus"/>
    <property type="evidence" value="ECO:0000250"/>
    <property type="project" value="UniProtKB"/>
</dbReference>
<dbReference type="GO" id="GO:0071014">
    <property type="term" value="C:post-mRNA release spliceosomal complex"/>
    <property type="evidence" value="ECO:0007669"/>
    <property type="project" value="TreeGrafter"/>
</dbReference>
<dbReference type="GO" id="GO:0000974">
    <property type="term" value="C:Prp19 complex"/>
    <property type="evidence" value="ECO:0007669"/>
    <property type="project" value="TreeGrafter"/>
</dbReference>
<dbReference type="GO" id="GO:0071007">
    <property type="term" value="C:U2-type catalytic step 2 spliceosome"/>
    <property type="evidence" value="ECO:0000250"/>
    <property type="project" value="UniProtKB"/>
</dbReference>
<dbReference type="GO" id="GO:0000398">
    <property type="term" value="P:mRNA splicing, via spliceosome"/>
    <property type="evidence" value="ECO:0000250"/>
    <property type="project" value="UniProtKB"/>
</dbReference>
<dbReference type="InterPro" id="IPR013260">
    <property type="entry name" value="mRNA_splic_SYF2"/>
</dbReference>
<dbReference type="PANTHER" id="PTHR13264">
    <property type="entry name" value="GCIP-INTERACTING PROTEIN P29"/>
    <property type="match status" value="1"/>
</dbReference>
<dbReference type="PANTHER" id="PTHR13264:SF5">
    <property type="entry name" value="PRE-MRNA-SPLICING FACTOR SYF2"/>
    <property type="match status" value="1"/>
</dbReference>
<dbReference type="Pfam" id="PF08231">
    <property type="entry name" value="SYF2"/>
    <property type="match status" value="1"/>
</dbReference>
<keyword id="KW-0175">Coiled coil</keyword>
<keyword id="KW-0507">mRNA processing</keyword>
<keyword id="KW-0508">mRNA splicing</keyword>
<keyword id="KW-0539">Nucleus</keyword>
<keyword id="KW-0747">Spliceosome</keyword>
<name>SYF2_GEKJA</name>
<protein>
    <recommendedName>
        <fullName>Pre-mRNA-splicing factor syf2</fullName>
    </recommendedName>
</protein>
<comment type="function">
    <text evidence="1">Involved in pre-mRNA splicing as component of the spliceosome.</text>
</comment>
<comment type="subunit">
    <text evidence="1">Identified in the spliceosome C complex.</text>
</comment>
<comment type="subcellular location">
    <subcellularLocation>
        <location evidence="1">Nucleus</location>
    </subcellularLocation>
</comment>
<comment type="similarity">
    <text evidence="4">Belongs to the SYF2 family.</text>
</comment>
<evidence type="ECO:0000250" key="1">
    <source>
        <dbReference type="UniProtKB" id="O95926"/>
    </source>
</evidence>
<evidence type="ECO:0000255" key="2"/>
<evidence type="ECO:0000256" key="3">
    <source>
        <dbReference type="SAM" id="MobiDB-lite"/>
    </source>
</evidence>
<evidence type="ECO:0000305" key="4"/>
<proteinExistence type="evidence at transcript level"/>